<keyword id="KW-0963">Cytoplasm</keyword>
<keyword id="KW-0489">Methyltransferase</keyword>
<keyword id="KW-0496">Mitochondrion</keyword>
<keyword id="KW-0539">Nucleus</keyword>
<keyword id="KW-1185">Reference proteome</keyword>
<keyword id="KW-0949">S-adenosyl-L-methionine</keyword>
<keyword id="KW-0808">Transferase</keyword>
<keyword id="KW-0819">tRNA processing</keyword>
<sequence length="421" mass="49114">MKLTQEIKFSLQKTQKVLSIQMQVHHINDFTKLFKKCIFPGSRWQLEQENIKSIATTFEEPLPENLQEFIKENNCQILEKEVTVGYDNMTYNEVLQQLLPKNVQAPQGYEIIGKIAHFNLSLEQLPYKYLIGQVLLDKNKHLQTVCNKLEKLHNVYRTPQLELLAGNNSYDAIVPEGGVRLFLNFEKVYWCTRLYSERERVIKYIKELSNGKNIKVLDLFCGIGPFSLRIAKDLNAQCLANDLNPECYYYLLKNIIENKVQNQVTPLNMDAREVVLKIYNKEIDFDFNHVYMNLPVLAINFLDVFKGFTQRTGKVDLPYIHVYGFAKGKDDQELIEQFSQRIIKGLPGFDKSQILRFHILKNVTKMKKMCCLSFQLDKKSAESEFGLVEQEDGNNSDFEDDEKMEQHELVEDVVNKKVKID</sequence>
<organism>
    <name type="scientific">Paramecium tetraurelia</name>
    <dbReference type="NCBI Taxonomy" id="5888"/>
    <lineage>
        <taxon>Eukaryota</taxon>
        <taxon>Sar</taxon>
        <taxon>Alveolata</taxon>
        <taxon>Ciliophora</taxon>
        <taxon>Intramacronucleata</taxon>
        <taxon>Oligohymenophorea</taxon>
        <taxon>Peniculida</taxon>
        <taxon>Parameciidae</taxon>
        <taxon>Paramecium</taxon>
    </lineage>
</organism>
<name>TRM5_PARTE</name>
<reference key="1">
    <citation type="journal article" date="2006" name="Nature">
        <title>Global trends of whole-genome duplications revealed by the ciliate Paramecium tetraurelia.</title>
        <authorList>
            <person name="Aury J.-M."/>
            <person name="Jaillon O."/>
            <person name="Duret L."/>
            <person name="Noel B."/>
            <person name="Jubin C."/>
            <person name="Porcel B.M."/>
            <person name="Segurens B."/>
            <person name="Daubin V."/>
            <person name="Anthouard V."/>
            <person name="Aiach N."/>
            <person name="Arnaiz O."/>
            <person name="Billaut A."/>
            <person name="Beisson J."/>
            <person name="Blanc I."/>
            <person name="Bouhouche K."/>
            <person name="Camara F."/>
            <person name="Duharcourt S."/>
            <person name="Guigo R."/>
            <person name="Gogendeau D."/>
            <person name="Katinka M."/>
            <person name="Keller A.-M."/>
            <person name="Kissmehl R."/>
            <person name="Klotz C."/>
            <person name="Koll F."/>
            <person name="Le Mouel A."/>
            <person name="Lepere G."/>
            <person name="Malinsky S."/>
            <person name="Nowacki M."/>
            <person name="Nowak J.K."/>
            <person name="Plattner H."/>
            <person name="Poulain J."/>
            <person name="Ruiz F."/>
            <person name="Serrano V."/>
            <person name="Zagulski M."/>
            <person name="Dessen P."/>
            <person name="Betermier M."/>
            <person name="Weissenbach J."/>
            <person name="Scarpelli C."/>
            <person name="Schaechter V."/>
            <person name="Sperling L."/>
            <person name="Meyer E."/>
            <person name="Cohen J."/>
            <person name="Wincker P."/>
        </authorList>
    </citation>
    <scope>NUCLEOTIDE SEQUENCE [LARGE SCALE GENOMIC DNA]</scope>
    <source>
        <strain>Stock d4-2</strain>
    </source>
</reference>
<dbReference type="EC" id="2.1.1.228" evidence="1"/>
<dbReference type="EMBL" id="CT868059">
    <property type="protein sequence ID" value="CAK68363.1"/>
    <property type="molecule type" value="Genomic_DNA"/>
</dbReference>
<dbReference type="RefSeq" id="XP_001435760.1">
    <property type="nucleotide sequence ID" value="XM_001435723.1"/>
</dbReference>
<dbReference type="SMR" id="A0CC46"/>
<dbReference type="STRING" id="5888.A0CC46"/>
<dbReference type="EnsemblProtists" id="CAK68363">
    <property type="protein sequence ID" value="CAK68363"/>
    <property type="gene ID" value="GSPATT00037147001"/>
</dbReference>
<dbReference type="GeneID" id="5021545"/>
<dbReference type="KEGG" id="ptm:GSPATT00037147001"/>
<dbReference type="eggNOG" id="KOG2078">
    <property type="taxonomic scope" value="Eukaryota"/>
</dbReference>
<dbReference type="HOGENOM" id="CLU_022610_2_3_1"/>
<dbReference type="InParanoid" id="A0CC46"/>
<dbReference type="OMA" id="VGSHSQF"/>
<dbReference type="OrthoDB" id="408788at2759"/>
<dbReference type="Proteomes" id="UP000000600">
    <property type="component" value="Partially assembled WGS sequence"/>
</dbReference>
<dbReference type="GO" id="GO:0005737">
    <property type="term" value="C:cytoplasm"/>
    <property type="evidence" value="ECO:0000318"/>
    <property type="project" value="GO_Central"/>
</dbReference>
<dbReference type="GO" id="GO:0005759">
    <property type="term" value="C:mitochondrial matrix"/>
    <property type="evidence" value="ECO:0007669"/>
    <property type="project" value="UniProtKB-SubCell"/>
</dbReference>
<dbReference type="GO" id="GO:0005634">
    <property type="term" value="C:nucleus"/>
    <property type="evidence" value="ECO:0007669"/>
    <property type="project" value="UniProtKB-SubCell"/>
</dbReference>
<dbReference type="GO" id="GO:0052906">
    <property type="term" value="F:tRNA (guanine(37)-N1)-methyltransferase activity"/>
    <property type="evidence" value="ECO:0007669"/>
    <property type="project" value="UniProtKB-UniRule"/>
</dbReference>
<dbReference type="GO" id="GO:0008175">
    <property type="term" value="F:tRNA methyltransferase activity"/>
    <property type="evidence" value="ECO:0000318"/>
    <property type="project" value="GO_Central"/>
</dbReference>
<dbReference type="GO" id="GO:0002939">
    <property type="term" value="P:tRNA N1-guanine methylation"/>
    <property type="evidence" value="ECO:0000318"/>
    <property type="project" value="GO_Central"/>
</dbReference>
<dbReference type="CDD" id="cd02440">
    <property type="entry name" value="AdoMet_MTases"/>
    <property type="match status" value="1"/>
</dbReference>
<dbReference type="FunFam" id="3.30.300.110:FF:000001">
    <property type="entry name" value="tRNA (guanine(37)-N1)-methyltransferase"/>
    <property type="match status" value="1"/>
</dbReference>
<dbReference type="Gene3D" id="3.30.300.110">
    <property type="entry name" value="Met-10+ protein-like domains"/>
    <property type="match status" value="1"/>
</dbReference>
<dbReference type="Gene3D" id="3.40.50.150">
    <property type="entry name" value="Vaccinia Virus protein VP39"/>
    <property type="match status" value="1"/>
</dbReference>
<dbReference type="HAMAP" id="MF_03152">
    <property type="entry name" value="TRM5"/>
    <property type="match status" value="1"/>
</dbReference>
<dbReference type="InterPro" id="IPR030382">
    <property type="entry name" value="MeTrfase_TRM5/TYW2"/>
</dbReference>
<dbReference type="InterPro" id="IPR029063">
    <property type="entry name" value="SAM-dependent_MTases_sf"/>
</dbReference>
<dbReference type="InterPro" id="IPR056743">
    <property type="entry name" value="TRM5-TYW2-like_MTfase"/>
</dbReference>
<dbReference type="InterPro" id="IPR056744">
    <property type="entry name" value="TRM5/TYW2-like_N"/>
</dbReference>
<dbReference type="InterPro" id="IPR025792">
    <property type="entry name" value="tRNA_Gua_MeTrfase_euk"/>
</dbReference>
<dbReference type="PANTHER" id="PTHR23245:SF43">
    <property type="entry name" value="TRNA (GUANINE(37)-N1)-METHYLTRANSFERASE 2"/>
    <property type="match status" value="1"/>
</dbReference>
<dbReference type="PANTHER" id="PTHR23245">
    <property type="entry name" value="TRNA METHYLTRANSFERASE"/>
    <property type="match status" value="1"/>
</dbReference>
<dbReference type="Pfam" id="PF02475">
    <property type="entry name" value="TRM5-TYW2_MTfase"/>
    <property type="match status" value="1"/>
</dbReference>
<dbReference type="Pfam" id="PF25133">
    <property type="entry name" value="TYW2_N_2"/>
    <property type="match status" value="1"/>
</dbReference>
<dbReference type="SUPFAM" id="SSF53335">
    <property type="entry name" value="S-adenosyl-L-methionine-dependent methyltransferases"/>
    <property type="match status" value="1"/>
</dbReference>
<dbReference type="PROSITE" id="PS51684">
    <property type="entry name" value="SAM_MT_TRM5_TYW2"/>
    <property type="match status" value="1"/>
</dbReference>
<evidence type="ECO:0000255" key="1">
    <source>
        <dbReference type="HAMAP-Rule" id="MF_03152"/>
    </source>
</evidence>
<evidence type="ECO:0000305" key="2"/>
<protein>
    <recommendedName>
        <fullName evidence="1">tRNA (guanine(37)-N(1))-methyltransferase</fullName>
        <ecNumber evidence="1">2.1.1.228</ecNumber>
    </recommendedName>
    <alternativeName>
        <fullName evidence="1">M1G-methyltransferase</fullName>
    </alternativeName>
    <alternativeName>
        <fullName evidence="1">tRNA [GM37] methyltransferase</fullName>
    </alternativeName>
    <alternativeName>
        <fullName evidence="1">tRNA methyltransferase 5 homolog</fullName>
    </alternativeName>
</protein>
<feature type="chain" id="PRO_0000414142" description="tRNA (guanine(37)-N(1))-methyltransferase">
    <location>
        <begin position="1"/>
        <end position="421"/>
    </location>
</feature>
<feature type="binding site" evidence="1">
    <location>
        <position position="198"/>
    </location>
    <ligand>
        <name>S-adenosyl-L-methionine</name>
        <dbReference type="ChEBI" id="CHEBI:59789"/>
    </ligand>
</feature>
<feature type="binding site" evidence="1">
    <location>
        <begin position="242"/>
        <end position="243"/>
    </location>
    <ligand>
        <name>S-adenosyl-L-methionine</name>
        <dbReference type="ChEBI" id="CHEBI:59789"/>
    </ligand>
</feature>
<feature type="binding site" evidence="1">
    <location>
        <begin position="270"/>
        <end position="271"/>
    </location>
    <ligand>
        <name>S-adenosyl-L-methionine</name>
        <dbReference type="ChEBI" id="CHEBI:59789"/>
    </ligand>
</feature>
<feature type="binding site" evidence="1">
    <location>
        <position position="293"/>
    </location>
    <ligand>
        <name>S-adenosyl-L-methionine</name>
        <dbReference type="ChEBI" id="CHEBI:59789"/>
    </ligand>
</feature>
<accession>A0CC46</accession>
<comment type="function">
    <text evidence="1">Specifically methylates the N1 position of guanosine-37 in various cytoplasmic and mitochondrial tRNAs. Methylation is not dependent on the nature of the nucleoside 5' of the target nucleoside. This is the first step in the biosynthesis of wybutosine (yW), a modified base adjacent to the anticodon of tRNAs and required for accurate decoding.</text>
</comment>
<comment type="catalytic activity">
    <reaction evidence="1">
        <text>guanosine(37) in tRNA + S-adenosyl-L-methionine = N(1)-methylguanosine(37) in tRNA + S-adenosyl-L-homocysteine + H(+)</text>
        <dbReference type="Rhea" id="RHEA:36899"/>
        <dbReference type="Rhea" id="RHEA-COMP:10145"/>
        <dbReference type="Rhea" id="RHEA-COMP:10147"/>
        <dbReference type="ChEBI" id="CHEBI:15378"/>
        <dbReference type="ChEBI" id="CHEBI:57856"/>
        <dbReference type="ChEBI" id="CHEBI:59789"/>
        <dbReference type="ChEBI" id="CHEBI:73542"/>
        <dbReference type="ChEBI" id="CHEBI:74269"/>
        <dbReference type="EC" id="2.1.1.228"/>
    </reaction>
</comment>
<comment type="subunit">
    <text evidence="1">Monomer.</text>
</comment>
<comment type="subcellular location">
    <subcellularLocation>
        <location evidence="1">Mitochondrion matrix</location>
    </subcellularLocation>
    <subcellularLocation>
        <location evidence="1">Nucleus</location>
    </subcellularLocation>
    <subcellularLocation>
        <location evidence="1">Cytoplasm</location>
    </subcellularLocation>
    <text evidence="1">Predominantly in the mitochondria and in the nucleus.</text>
</comment>
<comment type="similarity">
    <text evidence="2">Belongs to the class I-like SAM-binding methyltransferase superfamily. TRM5/TYW2 family.</text>
</comment>
<proteinExistence type="inferred from homology"/>
<gene>
    <name type="ORF">GSPATT00037147001</name>
</gene>